<proteinExistence type="evidence at protein level"/>
<comment type="function">
    <text evidence="1 2">Plays a central role in tight junction maintenance via the complex formed with ARHGAP17, which acts by regulating the uptake of polarity proteins at tight junctions. Appears to regulate endothelial cell migration and tube formation. May also play a role in the assembly of endothelial cell-cell junctions (By similarity). Repressor of YAP1 and WWTR1/TAZ transcription of target genes, potentially via regulation of Hippo signaling-mediated phosphorylation of YAP1 which results in its recruitment to tight junctions (By similarity).</text>
</comment>
<comment type="subunit">
    <text evidence="2">Component of a complex whose core is composed of ARHGAP17, AMOT, PALS1, PATJ and PARD3/PAR3 (By similarity). Interacts with MAGI1 and angiostatin (By similarity). Interacts with YAP1; the interaction facilitates translocation of YAP1 to the cytoplasm and tight junctions (By similarity). Interacts with WWTR1/TAZ (via WW domain); the interaction facilitates translocation of WWTR1/TAZ to the cytoplasm (By similarity).</text>
</comment>
<comment type="subcellular location">
    <subcellularLocation>
        <location evidence="1">Cell junction</location>
        <location evidence="1">Tight junction</location>
    </subcellularLocation>
    <text evidence="1">Localized on the cell surface. May act as a transmembrane protein (By similarity).</text>
</comment>
<comment type="alternative products">
    <event type="alternative splicing"/>
    <isoform>
        <id>Q8VHG2-1</id>
        <name>1</name>
        <sequence type="displayed"/>
    </isoform>
    <isoform>
        <id>Q8VHG2-2</id>
        <name>2</name>
        <sequence type="described" ref="VSP_027108 VSP_027109"/>
    </isoform>
</comment>
<comment type="tissue specificity">
    <text evidence="5">Expressed in brain, skeletal muscle and placenta.</text>
</comment>
<comment type="domain">
    <text>The angiostatin binding domain (850-1047) allows the binding to angiostatin.</text>
</comment>
<comment type="domain">
    <text evidence="1">The coiled coil domain interacts directly with the BAR domain of ARHGAP17.</text>
</comment>
<comment type="PTM">
    <text evidence="1">Polyubiquitinated by NEDD4, NEDD4L and ITCH, leading to proteasomal degradation.</text>
</comment>
<comment type="miscellaneous">
    <text>'Motus' means 'motility' in Latin.</text>
</comment>
<comment type="similarity">
    <text evidence="7">Belongs to the angiomotin family.</text>
</comment>
<comment type="sequence caution" evidence="7">
    <conflict type="erroneous initiation">
        <sequence resource="EMBL-CDS" id="AAH57638"/>
    </conflict>
</comment>
<comment type="sequence caution" evidence="7">
    <conflict type="erroneous initiation">
        <sequence resource="EMBL-CDS" id="AAL73436"/>
    </conflict>
</comment>
<comment type="sequence caution" evidence="7">
    <conflict type="erroneous initiation">
        <sequence resource="EMBL-CDS" id="CAM22158"/>
    </conflict>
</comment>
<comment type="sequence caution" evidence="7">
    <conflict type="erroneous initiation">
        <sequence resource="EMBL-CDS" id="CAM22159"/>
    </conflict>
</comment>
<keyword id="KW-0025">Alternative splicing</keyword>
<keyword id="KW-0965">Cell junction</keyword>
<keyword id="KW-0175">Coiled coil</keyword>
<keyword id="KW-1017">Isopeptide bond</keyword>
<keyword id="KW-0597">Phosphoprotein</keyword>
<keyword id="KW-1185">Reference proteome</keyword>
<keyword id="KW-0796">Tight junction</keyword>
<keyword id="KW-0832">Ubl conjugation</keyword>
<dbReference type="EMBL" id="AL807753">
    <property type="protein sequence ID" value="CAM22158.1"/>
    <property type="status" value="ALT_INIT"/>
    <property type="molecule type" value="Genomic_DNA"/>
</dbReference>
<dbReference type="EMBL" id="AL807753">
    <property type="protein sequence ID" value="CAM22159.1"/>
    <property type="status" value="ALT_INIT"/>
    <property type="molecule type" value="Genomic_DNA"/>
</dbReference>
<dbReference type="EMBL" id="BC057638">
    <property type="protein sequence ID" value="AAH57638.1"/>
    <property type="status" value="ALT_INIT"/>
    <property type="molecule type" value="mRNA"/>
</dbReference>
<dbReference type="EMBL" id="AF461135">
    <property type="protein sequence ID" value="AAL73436.1"/>
    <property type="status" value="ALT_INIT"/>
    <property type="molecule type" value="mRNA"/>
</dbReference>
<dbReference type="EMBL" id="AK129277">
    <property type="protein sequence ID" value="BAC98087.1"/>
    <property type="molecule type" value="mRNA"/>
</dbReference>
<dbReference type="CCDS" id="CCDS72443.1">
    <molecule id="Q8VHG2-1"/>
</dbReference>
<dbReference type="RefSeq" id="NP_001277203.1">
    <molecule id="Q8VHG2-2"/>
    <property type="nucleotide sequence ID" value="NM_001290274.2"/>
</dbReference>
<dbReference type="RefSeq" id="NP_001390316.1">
    <molecule id="Q8VHG2-1"/>
    <property type="nucleotide sequence ID" value="NM_001403387.1"/>
</dbReference>
<dbReference type="RefSeq" id="NP_001390317.1">
    <molecule id="Q8VHG2-1"/>
    <property type="nucleotide sequence ID" value="NM_001403388.1"/>
</dbReference>
<dbReference type="RefSeq" id="NP_695231.3">
    <molecule id="Q8VHG2-1"/>
    <property type="nucleotide sequence ID" value="NM_153319.4"/>
</dbReference>
<dbReference type="RefSeq" id="XP_006528927.1">
    <property type="nucleotide sequence ID" value="XM_006528864.3"/>
</dbReference>
<dbReference type="RefSeq" id="XP_011246130.1">
    <property type="nucleotide sequence ID" value="XM_011247828.2"/>
</dbReference>
<dbReference type="SMR" id="Q8VHG2"/>
<dbReference type="BioGRID" id="205274">
    <property type="interactions" value="23"/>
</dbReference>
<dbReference type="FunCoup" id="Q8VHG2">
    <property type="interactions" value="575"/>
</dbReference>
<dbReference type="IntAct" id="Q8VHG2">
    <property type="interactions" value="7"/>
</dbReference>
<dbReference type="STRING" id="10090.ENSMUSP00000108455"/>
<dbReference type="GlyGen" id="Q8VHG2">
    <property type="glycosylation" value="18 sites, 2 N-linked glycans (2 sites), 1 O-linked glycan (9 sites)"/>
</dbReference>
<dbReference type="iPTMnet" id="Q8VHG2"/>
<dbReference type="PhosphoSitePlus" id="Q8VHG2"/>
<dbReference type="PaxDb" id="10090-ENSMUSP00000108455"/>
<dbReference type="PeptideAtlas" id="Q8VHG2"/>
<dbReference type="ProteomicsDB" id="296203">
    <molecule id="Q8VHG2-1"/>
</dbReference>
<dbReference type="ProteomicsDB" id="296204">
    <molecule id="Q8VHG2-2"/>
</dbReference>
<dbReference type="Pumba" id="Q8VHG2"/>
<dbReference type="Antibodypedia" id="29579">
    <property type="antibodies" value="446 antibodies from 32 providers"/>
</dbReference>
<dbReference type="DNASU" id="27494"/>
<dbReference type="Ensembl" id="ENSMUST00000112836.9">
    <molecule id="Q8VHG2-1"/>
    <property type="protein sequence ID" value="ENSMUSP00000108455.3"/>
    <property type="gene ID" value="ENSMUSG00000041688.17"/>
</dbReference>
<dbReference type="GeneID" id="27494"/>
<dbReference type="KEGG" id="mmu:27494"/>
<dbReference type="UCSC" id="uc009una.2">
    <molecule id="Q8VHG2-1"/>
    <property type="organism name" value="mouse"/>
</dbReference>
<dbReference type="UCSC" id="uc009unb.2">
    <molecule id="Q8VHG2-2"/>
    <property type="organism name" value="mouse"/>
</dbReference>
<dbReference type="AGR" id="MGI:108440"/>
<dbReference type="CTD" id="154796"/>
<dbReference type="MGI" id="MGI:108440">
    <property type="gene designation" value="Amot"/>
</dbReference>
<dbReference type="VEuPathDB" id="HostDB:ENSMUSG00000041688"/>
<dbReference type="eggNOG" id="ENOG502QVI5">
    <property type="taxonomic scope" value="Eukaryota"/>
</dbReference>
<dbReference type="GeneTree" id="ENSGT00940000159055"/>
<dbReference type="InParanoid" id="Q8VHG2"/>
<dbReference type="OMA" id="PYKNMST"/>
<dbReference type="OrthoDB" id="5974715at2759"/>
<dbReference type="PhylomeDB" id="Q8VHG2"/>
<dbReference type="TreeFam" id="TF333368"/>
<dbReference type="Reactome" id="R-MMU-2028269">
    <property type="pathway name" value="Signaling by Hippo"/>
</dbReference>
<dbReference type="Reactome" id="R-MMU-9762292">
    <property type="pathway name" value="Regulation of CDH11 function"/>
</dbReference>
<dbReference type="BioGRID-ORCS" id="27494">
    <property type="hits" value="3 hits in 56 CRISPR screens"/>
</dbReference>
<dbReference type="CD-CODE" id="CE726F99">
    <property type="entry name" value="Postsynaptic density"/>
</dbReference>
<dbReference type="ChiTaRS" id="Amot">
    <property type="organism name" value="mouse"/>
</dbReference>
<dbReference type="PRO" id="PR:Q8VHG2"/>
<dbReference type="Proteomes" id="UP000000589">
    <property type="component" value="Chromosome X"/>
</dbReference>
<dbReference type="RNAct" id="Q8VHG2">
    <property type="molecule type" value="protein"/>
</dbReference>
<dbReference type="Bgee" id="ENSMUSG00000041688">
    <property type="expression patterns" value="Expressed in placenta labyrinth and 266 other cell types or tissues"/>
</dbReference>
<dbReference type="ExpressionAtlas" id="Q8VHG2">
    <property type="expression patterns" value="baseline and differential"/>
</dbReference>
<dbReference type="GO" id="GO:0005884">
    <property type="term" value="C:actin filament"/>
    <property type="evidence" value="ECO:0000250"/>
    <property type="project" value="UniProtKB"/>
</dbReference>
<dbReference type="GO" id="GO:0005923">
    <property type="term" value="C:bicellular tight junction"/>
    <property type="evidence" value="ECO:0000314"/>
    <property type="project" value="MGI"/>
</dbReference>
<dbReference type="GO" id="GO:0008180">
    <property type="term" value="C:COP9 signalosome"/>
    <property type="evidence" value="ECO:0007669"/>
    <property type="project" value="Ensembl"/>
</dbReference>
<dbReference type="GO" id="GO:0031410">
    <property type="term" value="C:cytoplasmic vesicle"/>
    <property type="evidence" value="ECO:0000314"/>
    <property type="project" value="MGI"/>
</dbReference>
<dbReference type="GO" id="GO:0030139">
    <property type="term" value="C:endocytic vesicle"/>
    <property type="evidence" value="ECO:0000266"/>
    <property type="project" value="MGI"/>
</dbReference>
<dbReference type="GO" id="GO:0009897">
    <property type="term" value="C:external side of plasma membrane"/>
    <property type="evidence" value="ECO:0000266"/>
    <property type="project" value="MGI"/>
</dbReference>
<dbReference type="GO" id="GO:0098978">
    <property type="term" value="C:glutamatergic synapse"/>
    <property type="evidence" value="ECO:0007669"/>
    <property type="project" value="Ensembl"/>
</dbReference>
<dbReference type="GO" id="GO:0030027">
    <property type="term" value="C:lamellipodium"/>
    <property type="evidence" value="ECO:0000314"/>
    <property type="project" value="MGI"/>
</dbReference>
<dbReference type="GO" id="GO:0014069">
    <property type="term" value="C:postsynaptic density"/>
    <property type="evidence" value="ECO:0007669"/>
    <property type="project" value="Ensembl"/>
</dbReference>
<dbReference type="GO" id="GO:0001726">
    <property type="term" value="C:ruffle"/>
    <property type="evidence" value="ECO:0000266"/>
    <property type="project" value="MGI"/>
</dbReference>
<dbReference type="GO" id="GO:0043532">
    <property type="term" value="F:angiostatin binding"/>
    <property type="evidence" value="ECO:0000250"/>
    <property type="project" value="UniProtKB"/>
</dbReference>
<dbReference type="GO" id="GO:0038023">
    <property type="term" value="F:signaling receptor activity"/>
    <property type="evidence" value="ECO:0000266"/>
    <property type="project" value="MGI"/>
</dbReference>
<dbReference type="GO" id="GO:0030036">
    <property type="term" value="P:actin cytoskeleton organization"/>
    <property type="evidence" value="ECO:0000315"/>
    <property type="project" value="MGI"/>
</dbReference>
<dbReference type="GO" id="GO:0043534">
    <property type="term" value="P:blood vessel endothelial cell migration"/>
    <property type="evidence" value="ECO:0000315"/>
    <property type="project" value="MGI"/>
</dbReference>
<dbReference type="GO" id="GO:0048514">
    <property type="term" value="P:blood vessel morphogenesis"/>
    <property type="evidence" value="ECO:0000315"/>
    <property type="project" value="MGI"/>
</dbReference>
<dbReference type="GO" id="GO:0042074">
    <property type="term" value="P:cell migration involved in gastrulation"/>
    <property type="evidence" value="ECO:0000315"/>
    <property type="project" value="MGI"/>
</dbReference>
<dbReference type="GO" id="GO:0006935">
    <property type="term" value="P:chemotaxis"/>
    <property type="evidence" value="ECO:0000315"/>
    <property type="project" value="MGI"/>
</dbReference>
<dbReference type="GO" id="GO:0003365">
    <property type="term" value="P:establishment of cell polarity involved in ameboidal cell migration"/>
    <property type="evidence" value="ECO:0000315"/>
    <property type="project" value="MGI"/>
</dbReference>
<dbReference type="GO" id="GO:0001702">
    <property type="term" value="P:gastrulation with mouth forming second"/>
    <property type="evidence" value="ECO:0000315"/>
    <property type="project" value="MGI"/>
</dbReference>
<dbReference type="GO" id="GO:0035329">
    <property type="term" value="P:hippo signaling"/>
    <property type="evidence" value="ECO:0000266"/>
    <property type="project" value="MGI"/>
</dbReference>
<dbReference type="GO" id="GO:0001701">
    <property type="term" value="P:in utero embryonic development"/>
    <property type="evidence" value="ECO:0000315"/>
    <property type="project" value="MGI"/>
</dbReference>
<dbReference type="GO" id="GO:0016525">
    <property type="term" value="P:negative regulation of angiogenesis"/>
    <property type="evidence" value="ECO:0000266"/>
    <property type="project" value="MGI"/>
</dbReference>
<dbReference type="GO" id="GO:0000122">
    <property type="term" value="P:negative regulation of transcription by RNA polymerase II"/>
    <property type="evidence" value="ECO:0000250"/>
    <property type="project" value="UniProtKB"/>
</dbReference>
<dbReference type="GO" id="GO:0040019">
    <property type="term" value="P:positive regulation of embryonic development"/>
    <property type="evidence" value="ECO:0000315"/>
    <property type="project" value="MGI"/>
</dbReference>
<dbReference type="GO" id="GO:0008104">
    <property type="term" value="P:protein localization"/>
    <property type="evidence" value="ECO:0000315"/>
    <property type="project" value="MGI"/>
</dbReference>
<dbReference type="GO" id="GO:0030334">
    <property type="term" value="P:regulation of cell migration"/>
    <property type="evidence" value="ECO:0000266"/>
    <property type="project" value="MGI"/>
</dbReference>
<dbReference type="GO" id="GO:1905274">
    <property type="term" value="P:regulation of modification of postsynaptic actin cytoskeleton"/>
    <property type="evidence" value="ECO:0007669"/>
    <property type="project" value="Ensembl"/>
</dbReference>
<dbReference type="GO" id="GO:0051056">
    <property type="term" value="P:regulation of small GTPase mediated signal transduction"/>
    <property type="evidence" value="ECO:0000315"/>
    <property type="project" value="MGI"/>
</dbReference>
<dbReference type="GO" id="GO:0001570">
    <property type="term" value="P:vasculogenesis"/>
    <property type="evidence" value="ECO:0000315"/>
    <property type="project" value="MGI"/>
</dbReference>
<dbReference type="InterPro" id="IPR009114">
    <property type="entry name" value="Angiomotin"/>
</dbReference>
<dbReference type="InterPro" id="IPR051747">
    <property type="entry name" value="Angiomotin-like"/>
</dbReference>
<dbReference type="InterPro" id="IPR024646">
    <property type="entry name" value="Angiomotin_C"/>
</dbReference>
<dbReference type="PANTHER" id="PTHR14826">
    <property type="entry name" value="ANGIOMOTIN"/>
    <property type="match status" value="1"/>
</dbReference>
<dbReference type="PANTHER" id="PTHR14826:SF6">
    <property type="entry name" value="ANGIOMOTIN"/>
    <property type="match status" value="1"/>
</dbReference>
<dbReference type="Pfam" id="PF12240">
    <property type="entry name" value="Angiomotin_C"/>
    <property type="match status" value="1"/>
</dbReference>
<dbReference type="PRINTS" id="PR01807">
    <property type="entry name" value="ANGIOMOTIN"/>
</dbReference>
<accession>Q8VHG2</accession>
<accession>A2AMJ9</accession>
<accession>A2AMK0</accession>
<accession>Q6PFB8</accession>
<accession>Q6ZPZ1</accession>
<evidence type="ECO:0000250" key="1"/>
<evidence type="ECO:0000250" key="2">
    <source>
        <dbReference type="UniProtKB" id="Q4VCS5"/>
    </source>
</evidence>
<evidence type="ECO:0000255" key="3"/>
<evidence type="ECO:0000256" key="4">
    <source>
        <dbReference type="SAM" id="MobiDB-lite"/>
    </source>
</evidence>
<evidence type="ECO:0000269" key="5">
    <source>
    </source>
</evidence>
<evidence type="ECO:0000303" key="6">
    <source>
    </source>
</evidence>
<evidence type="ECO:0000305" key="7"/>
<evidence type="ECO:0007744" key="8">
    <source>
    </source>
</evidence>
<protein>
    <recommendedName>
        <fullName>Angiomotin</fullName>
    </recommendedName>
</protein>
<organism>
    <name type="scientific">Mus musculus</name>
    <name type="common">Mouse</name>
    <dbReference type="NCBI Taxonomy" id="10090"/>
    <lineage>
        <taxon>Eukaryota</taxon>
        <taxon>Metazoa</taxon>
        <taxon>Chordata</taxon>
        <taxon>Craniata</taxon>
        <taxon>Vertebrata</taxon>
        <taxon>Euteleostomi</taxon>
        <taxon>Mammalia</taxon>
        <taxon>Eutheria</taxon>
        <taxon>Euarchontoglires</taxon>
        <taxon>Glires</taxon>
        <taxon>Rodentia</taxon>
        <taxon>Myomorpha</taxon>
        <taxon>Muroidea</taxon>
        <taxon>Muridae</taxon>
        <taxon>Murinae</taxon>
        <taxon>Mus</taxon>
        <taxon>Mus</taxon>
    </lineage>
</organism>
<sequence>MRSSDDQPSGGTTVLQRLLQEQLRYGNPSENRSLLAIHQQATGNSSPFSTGSGNQGPQNDVLSSQDHHQQQLVAHPARQEPQGQEIQSENGVMEKQLSPRMQNNEELPTYEEAKVQSQYFRGQQHASVGAAFYVTGVTNQKMRTEGRPSVQRLTPGKMHQDEGLRDLKQGHVRSLSERLMQMSLATSGVKAHPPVTSAPLSPPQPNDLYKNATSSSEFYKAQGPPPSQHSLKGMEHRGPPPEYPFKGVPSQSVVCKSQEPGHFYSEHRLNQPGRTEGQLMRYQHPPEYGAARATQDISSLSLSARNSQPHSPTSSLTAGASSLPLLQSPPSTRLPPGQHLVSNQGDHSAHLSRHQQHLLSSQSHQGDHYRHAQASLTSAQQQPGEAYSAMPRAQQSASYQPMPADPFAMVSRAQQMVEILSDENRNLRQELDGCYEKVARLQKVETEIQRVSEAYENLVKSSSKREALEKAMRNKLEGEIRRMHDFNRDLRDRLETANKQLAEKEYEGSEDTRKTISQLFAKHKENQREKEKLEAELATARSTNEDQRRHIEIRDQALSNAQAKVVKLEEELKKKQVYVDKVEKMQQALVQLQAACEKREQLEHRLRTRLERELESLRIQQRQGNSQPTNASEYNAAALMELLREKEERILALEADMTKWEQKYLEENVMRHFALDAAATVAAQRDTTVISHSPNTSYDTALEARIQKEEEEILMANKRCLDMEGRIKTLHAQIIEKDAMIKVLQQRSRKEPSKTEQLSSMRPAKSLMSISNAGSGLLAHSSTLTGAPIMEEKRDDKSWKGSLGVLLGGDYRVEPVPSTPSPVPPSTPLLSAHSKTGSRDCSTQTERGPESTKTAAVTPISAPMAGPVAAAAPAAAINATAATNTATAATNTTIMVAAAPVAVAAVAAPAAAAATPSPANAAALAAAAAPATSVSAATSVSAANSISPAAPVAPAAVVPPAAPVSPAAAVQIPAAASLTPATVSPTAATATAAVAAATTAAITAAAAAATTAIQVAPATSAPVPSPASIPAPATAQASAPTPTQASTPAPTEPPSPVPTPTPALVQTEGPANPGASSGPRRLSTPNLMCNPDKPDAPAFHSSTLERKTPIQILGQEPDAEMVEYLI</sequence>
<reference key="1">
    <citation type="journal article" date="2009" name="PLoS Biol.">
        <title>Lineage-specific biology revealed by a finished genome assembly of the mouse.</title>
        <authorList>
            <person name="Church D.M."/>
            <person name="Goodstadt L."/>
            <person name="Hillier L.W."/>
            <person name="Zody M.C."/>
            <person name="Goldstein S."/>
            <person name="She X."/>
            <person name="Bult C.J."/>
            <person name="Agarwala R."/>
            <person name="Cherry J.L."/>
            <person name="DiCuccio M."/>
            <person name="Hlavina W."/>
            <person name="Kapustin Y."/>
            <person name="Meric P."/>
            <person name="Maglott D."/>
            <person name="Birtle Z."/>
            <person name="Marques A.C."/>
            <person name="Graves T."/>
            <person name="Zhou S."/>
            <person name="Teague B."/>
            <person name="Potamousis K."/>
            <person name="Churas C."/>
            <person name="Place M."/>
            <person name="Herschleb J."/>
            <person name="Runnheim R."/>
            <person name="Forrest D."/>
            <person name="Amos-Landgraf J."/>
            <person name="Schwartz D.C."/>
            <person name="Cheng Z."/>
            <person name="Lindblad-Toh K."/>
            <person name="Eichler E.E."/>
            <person name="Ponting C.P."/>
        </authorList>
    </citation>
    <scope>NUCLEOTIDE SEQUENCE [LARGE SCALE GENOMIC DNA]</scope>
    <source>
        <strain>C57BL/6J</strain>
    </source>
</reference>
<reference key="2">
    <citation type="journal article" date="2004" name="Genome Res.">
        <title>The status, quality, and expansion of the NIH full-length cDNA project: the Mammalian Gene Collection (MGC).</title>
        <authorList>
            <consortium name="The MGC Project Team"/>
        </authorList>
    </citation>
    <scope>NUCLEOTIDE SEQUENCE [LARGE SCALE MRNA] OF 183-1126 (ISOFORM 2)</scope>
    <source>
        <strain>FVB/N</strain>
        <tissue>Mammary tumor</tissue>
    </source>
</reference>
<reference key="3">
    <citation type="journal article" date="2002" name="Gene">
        <title>Angiomotin belongs to a novel protein family with conserved coiled-coil and PDZ binding domains.</title>
        <authorList>
            <person name="Bratt A."/>
            <person name="Wilson W.J."/>
            <person name="Troyanovsky B."/>
            <person name="Aase K."/>
            <person name="Kessler R."/>
            <person name="Van Meir E.G."/>
            <person name="Holmgren L."/>
        </authorList>
    </citation>
    <scope>NUCLEOTIDE SEQUENCE [MRNA] OF 199-1126 (ISOFORM 1)</scope>
    <scope>TISSUE SPECIFICITY</scope>
    <source>
        <strain>B6CBAF2</strain>
        <tissue>Placenta</tissue>
    </source>
</reference>
<reference key="4">
    <citation type="journal article" date="2003" name="Gene">
        <authorList>
            <person name="Bratt A."/>
            <person name="Wilson W.J."/>
            <person name="Troyanovsky B."/>
            <person name="Aase K."/>
            <person name="Kessler R."/>
            <person name="Van Meir E.G."/>
            <person name="Holmgren L."/>
        </authorList>
    </citation>
    <scope>ERRATUM OF PUBMED:12406577</scope>
</reference>
<reference key="5">
    <citation type="journal article" date="2003" name="DNA Res.">
        <title>Prediction of the coding sequences of mouse homologues of KIAA gene: III. The complete nucleotide sequences of 500 mouse KIAA-homologous cDNAs identified by screening of terminal sequences of cDNA clones randomly sampled from size-fractionated libraries.</title>
        <authorList>
            <person name="Okazaki N."/>
            <person name="Kikuno R."/>
            <person name="Ohara R."/>
            <person name="Inamoto S."/>
            <person name="Koseki H."/>
            <person name="Hiraoka S."/>
            <person name="Saga Y."/>
            <person name="Nagase T."/>
            <person name="Ohara O."/>
            <person name="Koga H."/>
        </authorList>
    </citation>
    <scope>NUCLEOTIDE SEQUENCE [LARGE SCALE MRNA] OF 588-1126 (ISOFORM 1)</scope>
    <source>
        <tissue>Embryonic tail</tissue>
    </source>
</reference>
<reference key="6">
    <citation type="journal article" date="2007" name="Proc. Natl. Acad. Sci. U.S.A.">
        <title>Large-scale phosphorylation analysis of mouse liver.</title>
        <authorList>
            <person name="Villen J."/>
            <person name="Beausoleil S.A."/>
            <person name="Gerber S.A."/>
            <person name="Gygi S.P."/>
        </authorList>
    </citation>
    <scope>PHOSPHORYLATION [LARGE SCALE ANALYSIS] AT SER-693</scope>
    <scope>IDENTIFICATION BY MASS SPECTROMETRY [LARGE SCALE ANALYSIS]</scope>
    <source>
        <tissue>Liver</tissue>
    </source>
</reference>
<reference key="7">
    <citation type="journal article" date="2010" name="Cell">
        <title>A tissue-specific atlas of mouse protein phosphorylation and expression.</title>
        <authorList>
            <person name="Huttlin E.L."/>
            <person name="Jedrychowski M.P."/>
            <person name="Elias J.E."/>
            <person name="Goswami T."/>
            <person name="Rad R."/>
            <person name="Beausoleil S.A."/>
            <person name="Villen J."/>
            <person name="Haas W."/>
            <person name="Sowa M.E."/>
            <person name="Gygi S.P."/>
        </authorList>
    </citation>
    <scope>IDENTIFICATION BY MASS SPECTROMETRY [LARGE SCALE ANALYSIS]</scope>
    <source>
        <tissue>Brain</tissue>
        <tissue>Kidney</tissue>
        <tissue>Liver</tissue>
        <tissue>Lung</tissue>
        <tissue>Pancreas</tissue>
    </source>
</reference>
<gene>
    <name type="primary">Amot</name>
    <name type="synonym">Kiaa1071</name>
</gene>
<name>AMOT_MOUSE</name>
<feature type="chain" id="PRO_0000190669" description="Angiomotin">
    <location>
        <begin position="1"/>
        <end position="1126"/>
    </location>
</feature>
<feature type="region of interest" description="Disordered" evidence="4">
    <location>
        <begin position="22"/>
        <end position="87"/>
    </location>
</feature>
<feature type="region of interest" description="Disordered" evidence="4">
    <location>
        <begin position="188"/>
        <end position="252"/>
    </location>
</feature>
<feature type="region of interest" description="Disordered" evidence="4">
    <location>
        <begin position="302"/>
        <end position="403"/>
    </location>
</feature>
<feature type="region of interest" description="Disordered" evidence="4">
    <location>
        <begin position="745"/>
        <end position="764"/>
    </location>
</feature>
<feature type="region of interest" description="Disordered" evidence="4">
    <location>
        <begin position="813"/>
        <end position="855"/>
    </location>
</feature>
<feature type="region of interest" description="Disordered" evidence="4">
    <location>
        <begin position="1019"/>
        <end position="1102"/>
    </location>
</feature>
<feature type="coiled-coil region" evidence="3">
    <location>
        <begin position="408"/>
        <end position="668"/>
    </location>
</feature>
<feature type="coiled-coil region" evidence="3">
    <location>
        <begin position="700"/>
        <end position="730"/>
    </location>
</feature>
<feature type="short sequence motif" description="PDZ-binding" evidence="1">
    <location>
        <begin position="1123"/>
        <end position="1126"/>
    </location>
</feature>
<feature type="compositionally biased region" description="Polar residues" evidence="4">
    <location>
        <begin position="39"/>
        <end position="64"/>
    </location>
</feature>
<feature type="compositionally biased region" description="Polar residues" evidence="4">
    <location>
        <begin position="302"/>
        <end position="320"/>
    </location>
</feature>
<feature type="compositionally biased region" description="Low complexity" evidence="4">
    <location>
        <begin position="321"/>
        <end position="336"/>
    </location>
</feature>
<feature type="compositionally biased region" description="Polar residues" evidence="4">
    <location>
        <begin position="374"/>
        <end position="383"/>
    </location>
</feature>
<feature type="compositionally biased region" description="Pro residues" evidence="4">
    <location>
        <begin position="817"/>
        <end position="827"/>
    </location>
</feature>
<feature type="compositionally biased region" description="Polar residues" evidence="4">
    <location>
        <begin position="833"/>
        <end position="855"/>
    </location>
</feature>
<feature type="compositionally biased region" description="Low complexity" evidence="4">
    <location>
        <begin position="1030"/>
        <end position="1049"/>
    </location>
</feature>
<feature type="compositionally biased region" description="Pro residues" evidence="4">
    <location>
        <begin position="1050"/>
        <end position="1061"/>
    </location>
</feature>
<feature type="modified residue" description="Phosphoserine" evidence="8">
    <location>
        <position position="693"/>
    </location>
</feature>
<feature type="cross-link" description="Glycyl lysine isopeptide (Lys-Gly) (interchain with G-Cter in SUMO2)" evidence="2">
    <location>
        <position position="573"/>
    </location>
</feature>
<feature type="cross-link" description="Glycyl lysine isopeptide (Lys-Gly) (interchain with G-Cter in SUMO2)" evidence="2">
    <location>
        <position position="574"/>
    </location>
</feature>
<feature type="splice variant" id="VSP_027108" description="In isoform 2." evidence="6">
    <original>VLLGGDYRVEPVPSTPSPVPPSTPLLSAHSKTGSRDCSTQTERGPESTK</original>
    <variation>KEKESNRSKGTVTDLESVLTLLHTARKRDNGPGSREENLESPLSMELDL</variation>
    <location>
        <begin position="805"/>
        <end position="853"/>
    </location>
</feature>
<feature type="splice variant" id="VSP_027109" description="In isoform 2." evidence="6">
    <location>
        <begin position="854"/>
        <end position="1126"/>
    </location>
</feature>
<feature type="sequence conflict" description="In Ref. 3; AAL73436." evidence="7" ref="3">
    <original>S</original>
    <variation>Y</variation>
    <location>
        <position position="298"/>
    </location>
</feature>
<feature type="sequence conflict" description="In Ref. 3; AAL73436 and 2; AAH57638." evidence="7" ref="3 2">
    <original>S</original>
    <variation>P</variation>
    <location>
        <position position="342"/>
    </location>
</feature>
<feature type="sequence conflict" description="In Ref. 3; AAL73436 and 2; AAH57638." evidence="7" ref="3 2">
    <original>M</original>
    <variation>I</variation>
    <location>
        <position position="409"/>
    </location>
</feature>
<feature type="sequence conflict" description="In Ref. 3; AAL73436." evidence="7" ref="3">
    <original>ENQREKEKLEAELATARSTNEDQRRHIEIRDQ</original>
    <variation>FCQPYNPAERKAEVRGGRFTIEAQRGHIKIRAR</variation>
    <location>
        <begin position="525"/>
        <end position="556"/>
    </location>
</feature>
<feature type="sequence conflict" description="In Ref. 3; AAL73436." evidence="7" ref="3">
    <original>VV</original>
    <variation>W</variation>
    <location>
        <begin position="565"/>
        <end position="566"/>
    </location>
</feature>
<feature type="sequence conflict" description="In Ref. 3; AAL73436." evidence="7" ref="3">
    <original>I</original>
    <variation>M</variation>
    <location>
        <position position="735"/>
    </location>
</feature>
<feature type="sequence conflict" description="In Ref. 3; AAL73436." evidence="7" ref="3">
    <original>PSK</original>
    <variation>RE</variation>
    <location>
        <begin position="752"/>
        <end position="754"/>
    </location>
</feature>